<dbReference type="EMBL" id="M84338">
    <property type="protein sequence ID" value="AAA25024.1"/>
    <property type="molecule type" value="Genomic_DNA"/>
</dbReference>
<dbReference type="EMBL" id="AE000511">
    <property type="protein sequence ID" value="AAD07132.1"/>
    <property type="molecule type" value="Genomic_DNA"/>
</dbReference>
<dbReference type="PIR" id="E64528">
    <property type="entry name" value="E64528"/>
</dbReference>
<dbReference type="RefSeq" id="NP_206869.1">
    <property type="nucleotide sequence ID" value="NC_000915.1"/>
</dbReference>
<dbReference type="RefSeq" id="WP_000357404.1">
    <property type="nucleotide sequence ID" value="NC_018939.1"/>
</dbReference>
<dbReference type="PDB" id="2WGL">
    <property type="method" value="X-ray"/>
    <property type="resolution" value="2.00 A"/>
    <property type="chains" value="A/B/C=1-254"/>
</dbReference>
<dbReference type="PDB" id="3CXN">
    <property type="method" value="X-ray"/>
    <property type="resolution" value="1.55 A"/>
    <property type="chains" value="A/B/C=2-254"/>
</dbReference>
<dbReference type="PDB" id="3O1Q">
    <property type="method" value="X-ray"/>
    <property type="resolution" value="1.85 A"/>
    <property type="chains" value="A/B/C=1-254"/>
</dbReference>
<dbReference type="PDB" id="3SF5">
    <property type="method" value="X-ray"/>
    <property type="resolution" value="2.50 A"/>
    <property type="chains" value="A/C=1-254"/>
</dbReference>
<dbReference type="PDB" id="4HI0">
    <property type="method" value="X-ray"/>
    <property type="resolution" value="2.35 A"/>
    <property type="chains" value="A/C=1-254"/>
</dbReference>
<dbReference type="PDB" id="8HC1">
    <property type="method" value="EM"/>
    <property type="resolution" value="2.30 A"/>
    <property type="chains" value="D/H/L/P/T/X/b/f/j/n/r/v=1-254"/>
</dbReference>
<dbReference type="PDBsum" id="2WGL"/>
<dbReference type="PDBsum" id="3CXN"/>
<dbReference type="PDBsum" id="3O1Q"/>
<dbReference type="PDBsum" id="3SF5"/>
<dbReference type="PDBsum" id="4HI0"/>
<dbReference type="PDBsum" id="8HC1"/>
<dbReference type="EMDB" id="EMD-34648"/>
<dbReference type="SMR" id="Q09065"/>
<dbReference type="DIP" id="DIP-3134N"/>
<dbReference type="IntAct" id="Q09065">
    <property type="interactions" value="5"/>
</dbReference>
<dbReference type="MINT" id="Q09065"/>
<dbReference type="STRING" id="85962.HP_0069"/>
<dbReference type="PaxDb" id="85962-C694_00330"/>
<dbReference type="DNASU" id="900170"/>
<dbReference type="EnsemblBacteria" id="AAD07132">
    <property type="protein sequence ID" value="AAD07132"/>
    <property type="gene ID" value="HP_0069"/>
</dbReference>
<dbReference type="KEGG" id="heo:C694_00330"/>
<dbReference type="KEGG" id="hpy:HP_0069"/>
<dbReference type="PATRIC" id="fig|85962.47.peg.72"/>
<dbReference type="eggNOG" id="COG0830">
    <property type="taxonomic scope" value="Bacteria"/>
</dbReference>
<dbReference type="InParanoid" id="Q09065"/>
<dbReference type="OrthoDB" id="9798772at2"/>
<dbReference type="PhylomeDB" id="Q09065"/>
<dbReference type="BioCyc" id="MetaCyc:HP_RS00350-MONOMER"/>
<dbReference type="EvolutionaryTrace" id="Q09065"/>
<dbReference type="Proteomes" id="UP000000429">
    <property type="component" value="Chromosome"/>
</dbReference>
<dbReference type="GO" id="GO:0005737">
    <property type="term" value="C:cytoplasm"/>
    <property type="evidence" value="ECO:0007669"/>
    <property type="project" value="UniProtKB-SubCell"/>
</dbReference>
<dbReference type="GO" id="GO:0016151">
    <property type="term" value="F:nickel cation binding"/>
    <property type="evidence" value="ECO:0007669"/>
    <property type="project" value="UniProtKB-UniRule"/>
</dbReference>
<dbReference type="GO" id="GO:0008152">
    <property type="term" value="P:metabolic process"/>
    <property type="evidence" value="ECO:0000315"/>
    <property type="project" value="CACAO"/>
</dbReference>
<dbReference type="FunFam" id="1.10.4190.10:FF:000002">
    <property type="entry name" value="Urease accessory protein UreF"/>
    <property type="match status" value="1"/>
</dbReference>
<dbReference type="Gene3D" id="1.10.4190.10">
    <property type="entry name" value="Urease accessory protein UreF"/>
    <property type="match status" value="1"/>
</dbReference>
<dbReference type="HAMAP" id="MF_01385">
    <property type="entry name" value="UreF"/>
    <property type="match status" value="1"/>
</dbReference>
<dbReference type="InterPro" id="IPR002639">
    <property type="entry name" value="UreF"/>
</dbReference>
<dbReference type="InterPro" id="IPR038277">
    <property type="entry name" value="UreF_sf"/>
</dbReference>
<dbReference type="PANTHER" id="PTHR33620">
    <property type="entry name" value="UREASE ACCESSORY PROTEIN F"/>
    <property type="match status" value="1"/>
</dbReference>
<dbReference type="PANTHER" id="PTHR33620:SF1">
    <property type="entry name" value="UREASE ACCESSORY PROTEIN F"/>
    <property type="match status" value="1"/>
</dbReference>
<dbReference type="Pfam" id="PF01730">
    <property type="entry name" value="UreF"/>
    <property type="match status" value="1"/>
</dbReference>
<dbReference type="PIRSF" id="PIRSF009467">
    <property type="entry name" value="Ureas_acces_UreF"/>
    <property type="match status" value="1"/>
</dbReference>
<comment type="function">
    <text evidence="1">Required for maturation of urease via the functional incorporation of the urease nickel metallocenter.</text>
</comment>
<comment type="subunit">
    <text evidence="1">UreH, UreF and UreG form a complex that acts as a GTP-hydrolysis-dependent molecular chaperone, activating the urease apoprotein by helping to assemble the nickel containing metallocenter of UreC. The UreE protein probably delivers the nickel.</text>
</comment>
<comment type="interaction">
    <interactant intactId="EBI-7743673">
        <id>Q09065</id>
    </interactant>
    <interactant intactId="EBI-7742750">
        <id>Q09066</id>
        <label>ureG</label>
    </interactant>
    <organismsDiffer>false</organismsDiffer>
    <experiments>6</experiments>
</comment>
<comment type="interaction">
    <interactant intactId="EBI-7743673">
        <id>Q09065</id>
    </interactant>
    <interactant intactId="EBI-7718225">
        <id>Q09067</id>
        <label>ureH</label>
    </interactant>
    <organismsDiffer>false</organismsDiffer>
    <experiments>12</experiments>
</comment>
<comment type="subcellular location">
    <subcellularLocation>
        <location evidence="1">Cytoplasm</location>
    </subcellularLocation>
</comment>
<comment type="disruption phenotype">
    <text evidence="3">Cells do not express urease.</text>
</comment>
<comment type="similarity">
    <text evidence="1">Belongs to the UreF family.</text>
</comment>
<sequence length="254" mass="28619">MDKGKSVKSTEKSVGMPPKTPKTDNNAHVDNEFLILQVNDAVFPIGSYTHSFGLETYIQQKKVTNKESALEYLKANLSSQFLYTEMLSLKLTYESALQQDLKKILGVEEVIMLSTSPMELRLANQKLGNRFIKTLQAMNELDMGEFFNAYAQKTKDPTHATSYGVFAASLGIELKKALRHYLYAQTSNMVINCVKSVPLSQNDGQKILLSLQSPFNQLIEKTLELDESHLCTASVQNDIKAMQHESLYSRLYMS</sequence>
<accession>Q09065</accession>
<organism>
    <name type="scientific">Helicobacter pylori (strain ATCC 700392 / 26695)</name>
    <name type="common">Campylobacter pylori</name>
    <dbReference type="NCBI Taxonomy" id="85962"/>
    <lineage>
        <taxon>Bacteria</taxon>
        <taxon>Pseudomonadati</taxon>
        <taxon>Campylobacterota</taxon>
        <taxon>Epsilonproteobacteria</taxon>
        <taxon>Campylobacterales</taxon>
        <taxon>Helicobacteraceae</taxon>
        <taxon>Helicobacter</taxon>
    </lineage>
</organism>
<protein>
    <recommendedName>
        <fullName evidence="1">Urease accessory protein UreF</fullName>
    </recommendedName>
</protein>
<evidence type="ECO:0000255" key="1">
    <source>
        <dbReference type="HAMAP-Rule" id="MF_01385"/>
    </source>
</evidence>
<evidence type="ECO:0000256" key="2">
    <source>
        <dbReference type="SAM" id="MobiDB-lite"/>
    </source>
</evidence>
<evidence type="ECO:0000269" key="3">
    <source>
    </source>
</evidence>
<evidence type="ECO:0000305" key="4"/>
<evidence type="ECO:0007829" key="5">
    <source>
        <dbReference type="PDB" id="3CXN"/>
    </source>
</evidence>
<evidence type="ECO:0007829" key="6">
    <source>
        <dbReference type="PDB" id="3O1Q"/>
    </source>
</evidence>
<evidence type="ECO:0007829" key="7">
    <source>
        <dbReference type="PDB" id="4HI0"/>
    </source>
</evidence>
<keyword id="KW-0002">3D-structure</keyword>
<keyword id="KW-0143">Chaperone</keyword>
<keyword id="KW-0963">Cytoplasm</keyword>
<keyword id="KW-0996">Nickel insertion</keyword>
<keyword id="KW-1185">Reference proteome</keyword>
<keyword id="KW-0843">Virulence</keyword>
<name>UREF_HELPY</name>
<gene>
    <name evidence="1" type="primary">ureF</name>
    <name type="ordered locus">HP_0069</name>
</gene>
<reference key="1">
    <citation type="journal article" date="1992" name="J. Bacteriol.">
        <title>Expression of Helicobacter pylori urease genes in Escherichia coli grown under nitrogen-limiting conditions.</title>
        <authorList>
            <person name="Cussac V."/>
            <person name="Ferrero R.L."/>
            <person name="Labigne A."/>
        </authorList>
    </citation>
    <scope>NUCLEOTIDE SEQUENCE [GENOMIC DNA]</scope>
    <scope>DISRUPTION PHENOTYPE</scope>
    <source>
        <strain>85P</strain>
    </source>
</reference>
<reference key="2">
    <citation type="journal article" date="1997" name="Nature">
        <title>The complete genome sequence of the gastric pathogen Helicobacter pylori.</title>
        <authorList>
            <person name="Tomb J.-F."/>
            <person name="White O."/>
            <person name="Kerlavage A.R."/>
            <person name="Clayton R.A."/>
            <person name="Sutton G.G."/>
            <person name="Fleischmann R.D."/>
            <person name="Ketchum K.A."/>
            <person name="Klenk H.-P."/>
            <person name="Gill S.R."/>
            <person name="Dougherty B.A."/>
            <person name="Nelson K.E."/>
            <person name="Quackenbush J."/>
            <person name="Zhou L."/>
            <person name="Kirkness E.F."/>
            <person name="Peterson S.N."/>
            <person name="Loftus B.J."/>
            <person name="Richardson D.L."/>
            <person name="Dodson R.J."/>
            <person name="Khalak H.G."/>
            <person name="Glodek A."/>
            <person name="McKenney K."/>
            <person name="FitzGerald L.M."/>
            <person name="Lee N."/>
            <person name="Adams M.D."/>
            <person name="Hickey E.K."/>
            <person name="Berg D.E."/>
            <person name="Gocayne J.D."/>
            <person name="Utterback T.R."/>
            <person name="Peterson J.D."/>
            <person name="Kelley J.M."/>
            <person name="Cotton M.D."/>
            <person name="Weidman J.F."/>
            <person name="Fujii C."/>
            <person name="Bowman C."/>
            <person name="Watthey L."/>
            <person name="Wallin E."/>
            <person name="Hayes W.S."/>
            <person name="Borodovsky M."/>
            <person name="Karp P.D."/>
            <person name="Smith H.O."/>
            <person name="Fraser C.M."/>
            <person name="Venter J.C."/>
        </authorList>
    </citation>
    <scope>NUCLEOTIDE SEQUENCE [LARGE SCALE GENOMIC DNA]</scope>
    <source>
        <strain>ATCC 700392 / 26695</strain>
    </source>
</reference>
<reference key="3">
    <citation type="journal article" date="2007" name="FEMS Microbiol. Lett.">
        <title>Bacterial factors that mediate colonization of the stomach and virulence of Helicobacter pylori.</title>
        <authorList>
            <person name="Clyne M."/>
            <person name="Dolan B."/>
            <person name="Reeves E.P."/>
        </authorList>
    </citation>
    <scope>REVIEW ON VIRULENCE OF H.PYLORI</scope>
</reference>
<proteinExistence type="evidence at protein level"/>
<feature type="chain" id="PRO_0000067648" description="Urease accessory protein UreF">
    <location>
        <begin position="1"/>
        <end position="254"/>
    </location>
</feature>
<feature type="region of interest" description="Disordered" evidence="2">
    <location>
        <begin position="1"/>
        <end position="26"/>
    </location>
</feature>
<feature type="compositionally biased region" description="Basic and acidic residues" evidence="2">
    <location>
        <begin position="1"/>
        <end position="11"/>
    </location>
</feature>
<feature type="sequence conflict" description="In Ref. 1; AAA25024." evidence="4" ref="1">
    <original>T</original>
    <variation>I</variation>
    <location>
        <position position="10"/>
    </location>
</feature>
<feature type="sequence conflict" description="In Ref. 1; AAA25024." evidence="4" ref="1">
    <original>P</original>
    <variation>L</variation>
    <location>
        <position position="17"/>
    </location>
</feature>
<feature type="sequence conflict" description="In Ref. 1; AAA25024." evidence="4" ref="1">
    <original>N</original>
    <variation>S</variation>
    <location>
        <position position="25"/>
    </location>
</feature>
<feature type="sequence conflict" description="In Ref. 1; AAA25024." evidence="4" ref="1">
    <original>ETYIQQ</original>
    <variation>LARNLHPA</variation>
    <location>
        <begin position="55"/>
        <end position="60"/>
    </location>
</feature>
<feature type="sequence conflict" description="In Ref. 1; AAA25024." evidence="4" ref="1">
    <original>E</original>
    <variation>K</variation>
    <location>
        <position position="71"/>
    </location>
</feature>
<feature type="sequence conflict" description="In Ref. 1; AAA25024." evidence="4" ref="1">
    <original>K</original>
    <variation>R</variation>
    <location>
        <position position="103"/>
    </location>
</feature>
<feature type="sequence conflict" description="In Ref. 1; AAA25024." evidence="4" ref="1">
    <original>VIM</original>
    <variation>IIT</variation>
    <location>
        <begin position="110"/>
        <end position="112"/>
    </location>
</feature>
<feature type="sequence conflict" description="In Ref. 1; AAA25024." evidence="4" ref="1">
    <original>MGE</original>
    <variation>IGA</variation>
    <location>
        <begin position="143"/>
        <end position="145"/>
    </location>
</feature>
<feature type="sequence conflict" description="In Ref. 1; AAA25024." evidence="4" ref="1">
    <original>KTK</original>
    <variation>QTE</variation>
    <location>
        <begin position="153"/>
        <end position="155"/>
    </location>
</feature>
<feature type="sequence conflict" description="In Ref. 1; AAA25024." evidence="4" ref="1">
    <original>T</original>
    <variation>A</variation>
    <location>
        <position position="232"/>
    </location>
</feature>
<feature type="turn" evidence="6">
    <location>
        <begin position="25"/>
        <end position="28"/>
    </location>
</feature>
<feature type="helix" evidence="5">
    <location>
        <begin position="31"/>
        <end position="39"/>
    </location>
</feature>
<feature type="strand" evidence="5">
    <location>
        <begin position="43"/>
        <end position="45"/>
    </location>
</feature>
<feature type="helix" evidence="7">
    <location>
        <begin position="47"/>
        <end position="49"/>
    </location>
</feature>
<feature type="helix" evidence="5">
    <location>
        <begin position="51"/>
        <end position="59"/>
    </location>
</feature>
<feature type="helix" evidence="5">
    <location>
        <begin position="66"/>
        <end position="77"/>
    </location>
</feature>
<feature type="helix" evidence="5">
    <location>
        <begin position="80"/>
        <end position="83"/>
    </location>
</feature>
<feature type="helix" evidence="5">
    <location>
        <begin position="85"/>
        <end position="97"/>
    </location>
</feature>
<feature type="helix" evidence="5">
    <location>
        <begin position="101"/>
        <end position="114"/>
    </location>
</feature>
<feature type="helix" evidence="5">
    <location>
        <begin position="118"/>
        <end position="137"/>
    </location>
</feature>
<feature type="helix" evidence="5">
    <location>
        <begin position="144"/>
        <end position="153"/>
    </location>
</feature>
<feature type="helix" evidence="5">
    <location>
        <begin position="159"/>
        <end position="170"/>
    </location>
</feature>
<feature type="helix" evidence="5">
    <location>
        <begin position="174"/>
        <end position="196"/>
    </location>
</feature>
<feature type="helix" evidence="5">
    <location>
        <begin position="201"/>
        <end position="210"/>
    </location>
</feature>
<feature type="helix" evidence="5">
    <location>
        <begin position="212"/>
        <end position="224"/>
    </location>
</feature>
<feature type="helix" evidence="5">
    <location>
        <begin position="227"/>
        <end position="229"/>
    </location>
</feature>
<feature type="helix" evidence="7">
    <location>
        <begin position="236"/>
        <end position="243"/>
    </location>
</feature>
<feature type="helix" evidence="7">
    <location>
        <begin position="244"/>
        <end position="246"/>
    </location>
</feature>